<feature type="chain" id="PRO_1000137036" description="Protein Syd">
    <location>
        <begin position="1"/>
        <end position="181"/>
    </location>
</feature>
<reference key="1">
    <citation type="journal article" date="2008" name="Genome Res.">
        <title>Comparative genome analysis of Salmonella enteritidis PT4 and Salmonella gallinarum 287/91 provides insights into evolutionary and host adaptation pathways.</title>
        <authorList>
            <person name="Thomson N.R."/>
            <person name="Clayton D.J."/>
            <person name="Windhorst D."/>
            <person name="Vernikos G."/>
            <person name="Davidson S."/>
            <person name="Churcher C."/>
            <person name="Quail M.A."/>
            <person name="Stevens M."/>
            <person name="Jones M.A."/>
            <person name="Watson M."/>
            <person name="Barron A."/>
            <person name="Layton A."/>
            <person name="Pickard D."/>
            <person name="Kingsley R.A."/>
            <person name="Bignell A."/>
            <person name="Clark L."/>
            <person name="Harris B."/>
            <person name="Ormond D."/>
            <person name="Abdellah Z."/>
            <person name="Brooks K."/>
            <person name="Cherevach I."/>
            <person name="Chillingworth T."/>
            <person name="Woodward J."/>
            <person name="Norberczak H."/>
            <person name="Lord A."/>
            <person name="Arrowsmith C."/>
            <person name="Jagels K."/>
            <person name="Moule S."/>
            <person name="Mungall K."/>
            <person name="Saunders M."/>
            <person name="Whitehead S."/>
            <person name="Chabalgoity J.A."/>
            <person name="Maskell D."/>
            <person name="Humphreys T."/>
            <person name="Roberts M."/>
            <person name="Barrow P.A."/>
            <person name="Dougan G."/>
            <person name="Parkhill J."/>
        </authorList>
    </citation>
    <scope>NUCLEOTIDE SEQUENCE [LARGE SCALE GENOMIC DNA]</scope>
    <source>
        <strain>P125109</strain>
    </source>
</reference>
<name>SYDP_SALEP</name>
<evidence type="ECO:0000255" key="1">
    <source>
        <dbReference type="HAMAP-Rule" id="MF_01104"/>
    </source>
</evidence>
<keyword id="KW-0997">Cell inner membrane</keyword>
<keyword id="KW-1003">Cell membrane</keyword>
<keyword id="KW-0472">Membrane</keyword>
<sequence>MDELTAQALKAFTTRYCDAWQEKHGSWPLSEELYGVPSPCIISSTRDAVYWQPQPFEGEENVNAVERAFDIMVQPALHAFYTTQFAGDMPAQFADEKLTLLQTWSQDDFRRVQENLIGHLVTQKRLKLPPTLFIATQENELEVISVCNLSGEVIKETLGTRNRTVLAATLAEFLTQLNPLL</sequence>
<accession>B5QWQ1</accession>
<proteinExistence type="inferred from homology"/>
<gene>
    <name evidence="1" type="primary">syd</name>
    <name type="ordered locus">SEN2811</name>
</gene>
<organism>
    <name type="scientific">Salmonella enteritidis PT4 (strain P125109)</name>
    <dbReference type="NCBI Taxonomy" id="550537"/>
    <lineage>
        <taxon>Bacteria</taxon>
        <taxon>Pseudomonadati</taxon>
        <taxon>Pseudomonadota</taxon>
        <taxon>Gammaproteobacteria</taxon>
        <taxon>Enterobacterales</taxon>
        <taxon>Enterobacteriaceae</taxon>
        <taxon>Salmonella</taxon>
    </lineage>
</organism>
<comment type="function">
    <text evidence="1">Interacts with the SecY protein in vivo. May bind preferentially to an uncomplexed state of SecY, thus functioning either as a chelating agent for excess SecY in the cell or as a regulatory factor that negatively controls the translocase function.</text>
</comment>
<comment type="subcellular location">
    <subcellularLocation>
        <location evidence="1">Cell inner membrane</location>
        <topology evidence="1">Peripheral membrane protein</topology>
        <orientation evidence="1">Cytoplasmic side</orientation>
    </subcellularLocation>
    <text evidence="1">Loosely associated with the cytoplasmic side of the inner membrane, probably via SecY.</text>
</comment>
<comment type="similarity">
    <text evidence="1">Belongs to the Syd family.</text>
</comment>
<dbReference type="EMBL" id="AM933172">
    <property type="protein sequence ID" value="CAR34390.1"/>
    <property type="molecule type" value="Genomic_DNA"/>
</dbReference>
<dbReference type="RefSeq" id="WP_000343990.1">
    <property type="nucleotide sequence ID" value="NC_011294.1"/>
</dbReference>
<dbReference type="SMR" id="B5QWQ1"/>
<dbReference type="KEGG" id="set:SEN2811"/>
<dbReference type="HOGENOM" id="CLU_121866_0_0_6"/>
<dbReference type="Proteomes" id="UP000000613">
    <property type="component" value="Chromosome"/>
</dbReference>
<dbReference type="GO" id="GO:0009898">
    <property type="term" value="C:cytoplasmic side of plasma membrane"/>
    <property type="evidence" value="ECO:0007669"/>
    <property type="project" value="InterPro"/>
</dbReference>
<dbReference type="CDD" id="cd16323">
    <property type="entry name" value="Syd"/>
    <property type="match status" value="1"/>
</dbReference>
<dbReference type="Gene3D" id="3.40.1580.20">
    <property type="entry name" value="Syd protein"/>
    <property type="match status" value="1"/>
</dbReference>
<dbReference type="HAMAP" id="MF_01104">
    <property type="entry name" value="Syd"/>
    <property type="match status" value="1"/>
</dbReference>
<dbReference type="InterPro" id="IPR009948">
    <property type="entry name" value="Syd"/>
</dbReference>
<dbReference type="InterPro" id="IPR038228">
    <property type="entry name" value="Syd_sf"/>
</dbReference>
<dbReference type="NCBIfam" id="NF003439">
    <property type="entry name" value="PRK04968.1"/>
    <property type="match status" value="1"/>
</dbReference>
<dbReference type="Pfam" id="PF07348">
    <property type="entry name" value="Syd"/>
    <property type="match status" value="1"/>
</dbReference>
<protein>
    <recommendedName>
        <fullName evidence="1">Protein Syd</fullName>
    </recommendedName>
</protein>